<name>HIS1_LEPBL</name>
<dbReference type="EC" id="2.4.2.17" evidence="1"/>
<dbReference type="EMBL" id="CP000348">
    <property type="protein sequence ID" value="ABJ79508.1"/>
    <property type="molecule type" value="Genomic_DNA"/>
</dbReference>
<dbReference type="RefSeq" id="WP_002726231.1">
    <property type="nucleotide sequence ID" value="NC_008508.1"/>
</dbReference>
<dbReference type="SMR" id="Q04ZI7"/>
<dbReference type="GeneID" id="61174764"/>
<dbReference type="KEGG" id="lbl:LBL_2095"/>
<dbReference type="HOGENOM" id="CLU_038115_2_0_12"/>
<dbReference type="UniPathway" id="UPA00031">
    <property type="reaction ID" value="UER00006"/>
</dbReference>
<dbReference type="GO" id="GO:0005737">
    <property type="term" value="C:cytoplasm"/>
    <property type="evidence" value="ECO:0007669"/>
    <property type="project" value="UniProtKB-SubCell"/>
</dbReference>
<dbReference type="GO" id="GO:0005524">
    <property type="term" value="F:ATP binding"/>
    <property type="evidence" value="ECO:0007669"/>
    <property type="project" value="UniProtKB-KW"/>
</dbReference>
<dbReference type="GO" id="GO:0003879">
    <property type="term" value="F:ATP phosphoribosyltransferase activity"/>
    <property type="evidence" value="ECO:0007669"/>
    <property type="project" value="UniProtKB-UniRule"/>
</dbReference>
<dbReference type="GO" id="GO:0000105">
    <property type="term" value="P:L-histidine biosynthetic process"/>
    <property type="evidence" value="ECO:0007669"/>
    <property type="project" value="UniProtKB-UniRule"/>
</dbReference>
<dbReference type="CDD" id="cd13595">
    <property type="entry name" value="PBP2_HisGs"/>
    <property type="match status" value="1"/>
</dbReference>
<dbReference type="FunFam" id="3.40.190.10:FF:000008">
    <property type="entry name" value="ATP phosphoribosyltransferase"/>
    <property type="match status" value="1"/>
</dbReference>
<dbReference type="Gene3D" id="3.40.190.10">
    <property type="entry name" value="Periplasmic binding protein-like II"/>
    <property type="match status" value="2"/>
</dbReference>
<dbReference type="HAMAP" id="MF_01018">
    <property type="entry name" value="HisG_Short"/>
    <property type="match status" value="1"/>
</dbReference>
<dbReference type="InterPro" id="IPR013820">
    <property type="entry name" value="ATP_PRibTrfase_cat"/>
</dbReference>
<dbReference type="InterPro" id="IPR018198">
    <property type="entry name" value="ATP_PRibTrfase_CS"/>
</dbReference>
<dbReference type="InterPro" id="IPR001348">
    <property type="entry name" value="ATP_PRibTrfase_HisG"/>
</dbReference>
<dbReference type="InterPro" id="IPR024893">
    <property type="entry name" value="ATP_PRibTrfase_HisG_short"/>
</dbReference>
<dbReference type="NCBIfam" id="TIGR00070">
    <property type="entry name" value="hisG"/>
    <property type="match status" value="1"/>
</dbReference>
<dbReference type="PANTHER" id="PTHR21403:SF8">
    <property type="entry name" value="ATP PHOSPHORIBOSYLTRANSFERASE"/>
    <property type="match status" value="1"/>
</dbReference>
<dbReference type="PANTHER" id="PTHR21403">
    <property type="entry name" value="ATP PHOSPHORIBOSYLTRANSFERASE ATP-PRTASE"/>
    <property type="match status" value="1"/>
</dbReference>
<dbReference type="Pfam" id="PF01634">
    <property type="entry name" value="HisG"/>
    <property type="match status" value="1"/>
</dbReference>
<dbReference type="SUPFAM" id="SSF53850">
    <property type="entry name" value="Periplasmic binding protein-like II"/>
    <property type="match status" value="1"/>
</dbReference>
<dbReference type="PROSITE" id="PS01316">
    <property type="entry name" value="ATP_P_PHORIBOSYLTR"/>
    <property type="match status" value="1"/>
</dbReference>
<protein>
    <recommendedName>
        <fullName evidence="1">ATP phosphoribosyltransferase</fullName>
        <shortName evidence="1">ATP-PRT</shortName>
        <shortName evidence="1">ATP-PRTase</shortName>
        <ecNumber evidence="1">2.4.2.17</ecNumber>
    </recommendedName>
</protein>
<evidence type="ECO:0000255" key="1">
    <source>
        <dbReference type="HAMAP-Rule" id="MF_01018"/>
    </source>
</evidence>
<feature type="chain" id="PRO_1000063284" description="ATP phosphoribosyltransferase">
    <location>
        <begin position="1"/>
        <end position="205"/>
    </location>
</feature>
<gene>
    <name evidence="1" type="primary">hisG</name>
    <name type="ordered locus">LBL_2095</name>
</gene>
<proteinExistence type="inferred from homology"/>
<comment type="function">
    <text evidence="1">Catalyzes the condensation of ATP and 5-phosphoribose 1-diphosphate to form N'-(5'-phosphoribosyl)-ATP (PR-ATP). Has a crucial role in the pathway because the rate of histidine biosynthesis seems to be controlled primarily by regulation of HisG enzymatic activity.</text>
</comment>
<comment type="catalytic activity">
    <reaction evidence="1">
        <text>1-(5-phospho-beta-D-ribosyl)-ATP + diphosphate = 5-phospho-alpha-D-ribose 1-diphosphate + ATP</text>
        <dbReference type="Rhea" id="RHEA:18473"/>
        <dbReference type="ChEBI" id="CHEBI:30616"/>
        <dbReference type="ChEBI" id="CHEBI:33019"/>
        <dbReference type="ChEBI" id="CHEBI:58017"/>
        <dbReference type="ChEBI" id="CHEBI:73183"/>
        <dbReference type="EC" id="2.4.2.17"/>
    </reaction>
</comment>
<comment type="pathway">
    <text evidence="1">Amino-acid biosynthesis; L-histidine biosynthesis; L-histidine from 5-phospho-alpha-D-ribose 1-diphosphate: step 1/9.</text>
</comment>
<comment type="subunit">
    <text evidence="1">Heteromultimer composed of HisG and HisZ subunits.</text>
</comment>
<comment type="subcellular location">
    <subcellularLocation>
        <location evidence="1">Cytoplasm</location>
    </subcellularLocation>
</comment>
<comment type="domain">
    <text>Lacks the C-terminal regulatory region which is replaced by HisZ.</text>
</comment>
<comment type="similarity">
    <text evidence="1">Belongs to the ATP phosphoribosyltransferase family. Short subfamily.</text>
</comment>
<keyword id="KW-0028">Amino-acid biosynthesis</keyword>
<keyword id="KW-0067">ATP-binding</keyword>
<keyword id="KW-0963">Cytoplasm</keyword>
<keyword id="KW-0328">Glycosyltransferase</keyword>
<keyword id="KW-0368">Histidine biosynthesis</keyword>
<keyword id="KW-0547">Nucleotide-binding</keyword>
<keyword id="KW-0808">Transferase</keyword>
<reference key="1">
    <citation type="journal article" date="2006" name="Proc. Natl. Acad. Sci. U.S.A.">
        <title>Genome reduction in Leptospira borgpetersenii reflects limited transmission potential.</title>
        <authorList>
            <person name="Bulach D.M."/>
            <person name="Zuerner R.L."/>
            <person name="Wilson P."/>
            <person name="Seemann T."/>
            <person name="McGrath A."/>
            <person name="Cullen P.A."/>
            <person name="Davis J."/>
            <person name="Johnson M."/>
            <person name="Kuczek E."/>
            <person name="Alt D.P."/>
            <person name="Peterson-Burch B."/>
            <person name="Coppel R.L."/>
            <person name="Rood J.I."/>
            <person name="Davies J.K."/>
            <person name="Adler B."/>
        </authorList>
    </citation>
    <scope>NUCLEOTIDE SEQUENCE [LARGE SCALE GENOMIC DNA]</scope>
    <source>
        <strain>L550</strain>
    </source>
</reference>
<organism>
    <name type="scientific">Leptospira borgpetersenii serovar Hardjo-bovis (strain L550)</name>
    <dbReference type="NCBI Taxonomy" id="355276"/>
    <lineage>
        <taxon>Bacteria</taxon>
        <taxon>Pseudomonadati</taxon>
        <taxon>Spirochaetota</taxon>
        <taxon>Spirochaetia</taxon>
        <taxon>Leptospirales</taxon>
        <taxon>Leptospiraceae</taxon>
        <taxon>Leptospira</taxon>
    </lineage>
</organism>
<sequence>MLTLALPKGRLAEESIDLMISKGWLSAKPDPDSKELIYNDPLGKIRILLVRSQDVATYVEQCAADAGISGWDVLKEGGYDLATPLDLGIGKCRLSLAAPEGYTLEARHRKIRVATKYPNLAREFFFHKGLSCEIFKLYGSIELAPLVGLSDCIVDLVSTGGTLKANGLKELNIILESSARLVFNRSSLYGKRKEAAEFMDSLSKI</sequence>
<accession>Q04ZI7</accession>